<organismHost>
    <name type="scientific">Solenopsis invicta</name>
    <name type="common">Red imported fire ant</name>
    <name type="synonym">Solenopsis wagneri</name>
    <dbReference type="NCBI Taxonomy" id="13686"/>
</organismHost>
<keyword id="KW-0007">Acetylation</keyword>
<keyword id="KW-0067">ATP-binding</keyword>
<keyword id="KW-0347">Helicase</keyword>
<keyword id="KW-0378">Hydrolase</keyword>
<keyword id="KW-0547">Nucleotide-binding</keyword>
<keyword id="KW-0548">Nucleotidyltransferase</keyword>
<keyword id="KW-0645">Protease</keyword>
<keyword id="KW-1185">Reference proteome</keyword>
<keyword id="KW-0688">Ribosomal frameshifting</keyword>
<keyword id="KW-0696">RNA-directed RNA polymerase</keyword>
<keyword id="KW-0788">Thiol protease</keyword>
<keyword id="KW-0808">Transferase</keyword>
<keyword id="KW-0693">Viral RNA replication</keyword>
<keyword id="KW-0946">Virion</keyword>
<accession>C1JCT2</accession>
<name>POLFS_SINV3</name>
<reference key="1">
    <citation type="journal article" date="2009" name="Virology">
        <title>Isolation and characterization of Solenopsis invicta virus 3, a new positive-strand RNA virus infecting the red imported fire ant, Solenopsis invicta.</title>
        <authorList>
            <person name="Valles S.M."/>
            <person name="Hashimoto Y."/>
        </authorList>
    </citation>
    <scope>NUCLEOTIDE SEQUENCE [GENOMIC RNA]</scope>
    <scope>ACTIVE SITE (3C-LIKE PROTEASE)</scope>
    <source>
        <strain evidence="12">DM</strain>
    </source>
</reference>
<reference key="2">
    <citation type="journal article" date="2014" name="PLoS ONE">
        <title>Solenopsis invicta virus 3: mapping of structural proteins, ribosomal frameshifting, and similarities to Acyrthosiphon pisum virus and Kelp fly virus.</title>
        <authorList>
            <person name="Valles S.M."/>
            <person name="Bell S."/>
            <person name="Firth A.E."/>
        </authorList>
    </citation>
    <scope>RIBOSOMAL FRAMESHIFTING</scope>
    <scope>FUNCTION (CAPSID PROTEIN VP1-FSD)</scope>
    <scope>SUBCELLULAR LOCATION (CAPSID PROTEIN VP1-FSD)</scope>
    <scope>FUNCTION (CAPSID PROTEIN VP2)</scope>
    <scope>SUBCELLULAR LOCATION (CAPSID PROTEIN VP2)</scope>
    <scope>ACETYLATION AT MET-2346</scope>
    <scope>PROTEOLYTIC CLEAVAGE (POLYPROTEIN-FSD)</scope>
</reference>
<comment type="function">
    <molecule>Capsid protein VP1-FSD</molecule>
    <text evidence="6">Assembles with VP1 and VP2 to form an icosahedral capsid. VP1 is about 5 time more abundant than VP1-FSD in the virion.</text>
</comment>
<comment type="function">
    <molecule>Capsid protein VP2</molecule>
    <text evidence="6">Assembles with VP1 and VP1-FSD to form an icosahedral capsid.</text>
</comment>
<comment type="function">
    <molecule>RNA-directed RNA polymerase</molecule>
    <text evidence="1 2">Replicates genomic and antigenomic RNA.</text>
</comment>
<comment type="catalytic activity">
    <reaction evidence="2">
        <text>RNA(n) + a ribonucleoside 5'-triphosphate = RNA(n+1) + diphosphate</text>
        <dbReference type="Rhea" id="RHEA:21248"/>
        <dbReference type="Rhea" id="RHEA-COMP:14527"/>
        <dbReference type="Rhea" id="RHEA-COMP:17342"/>
        <dbReference type="ChEBI" id="CHEBI:33019"/>
        <dbReference type="ChEBI" id="CHEBI:61557"/>
        <dbReference type="ChEBI" id="CHEBI:140395"/>
        <dbReference type="EC" id="2.7.7.48"/>
    </reaction>
</comment>
<comment type="catalytic activity">
    <reaction evidence="1">
        <text>ATP + H2O = ADP + phosphate + H(+)</text>
        <dbReference type="Rhea" id="RHEA:13065"/>
        <dbReference type="ChEBI" id="CHEBI:15377"/>
        <dbReference type="ChEBI" id="CHEBI:15378"/>
        <dbReference type="ChEBI" id="CHEBI:30616"/>
        <dbReference type="ChEBI" id="CHEBI:43474"/>
        <dbReference type="ChEBI" id="CHEBI:456216"/>
        <dbReference type="EC" id="3.6.4.13"/>
    </reaction>
</comment>
<comment type="subcellular location">
    <molecule>Capsid protein VP1-FSD</molecule>
    <subcellularLocation>
        <location evidence="6">Virion</location>
    </subcellularLocation>
</comment>
<comment type="subcellular location">
    <molecule>Capsid protein VP2</molecule>
    <subcellularLocation>
        <location evidence="6">Virion</location>
    </subcellularLocation>
</comment>
<comment type="alternative products">
    <event type="ribosomal frameshifting"/>
    <isoform>
        <id>C1JCT2-1</id>
        <name>Polyprotein-FSD</name>
        <sequence type="displayed"/>
    </isoform>
    <isoform>
        <id>C1JCT1-1</id>
        <name>Polyprotein</name>
        <sequence type="external"/>
    </isoform>
</comment>
<comment type="PTM">
    <molecule>Capsid protein VP1-FSD</molecule>
    <text evidence="6">N-acetylated.</text>
</comment>
<comment type="PTM">
    <molecule>Polyprotein-FSD</molecule>
    <text evidence="11">Proteolytic cleavages of the polyprotein yield mature proteins.</text>
</comment>
<comment type="miscellaneous">
    <molecule>Isoform Polyprotein-FSD</molecule>
    <text evidence="6">Produced by -1 ribosomal frameshifting.</text>
</comment>
<protein>
    <recommendedName>
        <fullName evidence="7">Polyprotein-FSD</fullName>
    </recommendedName>
    <component>
        <recommendedName>
            <fullName evidence="7">Helicase</fullName>
            <ecNumber evidence="9">3.6.4.13</ecNumber>
        </recommendedName>
    </component>
    <component>
        <recommendedName>
            <fullName evidence="7">3C-like protease</fullName>
            <shortName>3CL-PRO</shortName>
            <ecNumber evidence="9">3.4.22.-</ecNumber>
        </recommendedName>
    </component>
    <component>
        <recommendedName>
            <fullName evidence="2">RNA-directed RNA polymerase</fullName>
            <ecNumber evidence="2">2.7.7.48</ecNumber>
        </recommendedName>
    </component>
    <component>
        <recommendedName>
            <fullName evidence="8">Capsid protein VP1-FSD</fullName>
        </recommendedName>
    </component>
    <component>
        <recommendedName>
            <fullName evidence="8">Capsid protein VP2</fullName>
        </recommendedName>
    </component>
</protein>
<dbReference type="EC" id="3.6.4.13" evidence="9"/>
<dbReference type="EC" id="3.4.22.-" evidence="9"/>
<dbReference type="EC" id="2.7.7.48" evidence="2"/>
<dbReference type="EMBL" id="FJ528584">
    <property type="protein sequence ID" value="ACO37272.1"/>
    <property type="molecule type" value="Genomic_RNA"/>
</dbReference>
<dbReference type="RefSeq" id="YP_002790880.2">
    <molecule id="C1JCT2-1"/>
    <property type="nucleotide sequence ID" value="NC_012531.1"/>
</dbReference>
<dbReference type="iPTMnet" id="C1JCT2"/>
<dbReference type="GeneID" id="7751222"/>
<dbReference type="KEGG" id="vg:7751222"/>
<dbReference type="Proteomes" id="UP000207613">
    <property type="component" value="Genome"/>
</dbReference>
<dbReference type="GO" id="GO:0044423">
    <property type="term" value="C:virion component"/>
    <property type="evidence" value="ECO:0007669"/>
    <property type="project" value="UniProtKB-KW"/>
</dbReference>
<dbReference type="GO" id="GO:0005524">
    <property type="term" value="F:ATP binding"/>
    <property type="evidence" value="ECO:0007669"/>
    <property type="project" value="UniProtKB-KW"/>
</dbReference>
<dbReference type="GO" id="GO:0016887">
    <property type="term" value="F:ATP hydrolysis activity"/>
    <property type="evidence" value="ECO:0007669"/>
    <property type="project" value="RHEA"/>
</dbReference>
<dbReference type="GO" id="GO:0004197">
    <property type="term" value="F:cysteine-type endopeptidase activity"/>
    <property type="evidence" value="ECO:0007669"/>
    <property type="project" value="InterPro"/>
</dbReference>
<dbReference type="GO" id="GO:0003723">
    <property type="term" value="F:RNA binding"/>
    <property type="evidence" value="ECO:0007669"/>
    <property type="project" value="InterPro"/>
</dbReference>
<dbReference type="GO" id="GO:0003724">
    <property type="term" value="F:RNA helicase activity"/>
    <property type="evidence" value="ECO:0007669"/>
    <property type="project" value="UniProtKB-EC"/>
</dbReference>
<dbReference type="GO" id="GO:0003968">
    <property type="term" value="F:RNA-directed RNA polymerase activity"/>
    <property type="evidence" value="ECO:0007669"/>
    <property type="project" value="UniProtKB-KW"/>
</dbReference>
<dbReference type="GO" id="GO:0006351">
    <property type="term" value="P:DNA-templated transcription"/>
    <property type="evidence" value="ECO:0007669"/>
    <property type="project" value="InterPro"/>
</dbReference>
<dbReference type="GO" id="GO:0006508">
    <property type="term" value="P:proteolysis"/>
    <property type="evidence" value="ECO:0007669"/>
    <property type="project" value="UniProtKB-KW"/>
</dbReference>
<dbReference type="GO" id="GO:0039694">
    <property type="term" value="P:viral RNA genome replication"/>
    <property type="evidence" value="ECO:0007669"/>
    <property type="project" value="InterPro"/>
</dbReference>
<dbReference type="GO" id="GO:0075523">
    <property type="term" value="P:viral translational frameshifting"/>
    <property type="evidence" value="ECO:0007669"/>
    <property type="project" value="UniProtKB-KW"/>
</dbReference>
<dbReference type="CDD" id="cd00048">
    <property type="entry name" value="DSRM_SF"/>
    <property type="match status" value="1"/>
</dbReference>
<dbReference type="CDD" id="cd23169">
    <property type="entry name" value="ps-ssRNAv-Picornavirales"/>
    <property type="match status" value="1"/>
</dbReference>
<dbReference type="Gene3D" id="2.60.120.20">
    <property type="match status" value="1"/>
</dbReference>
<dbReference type="Gene3D" id="3.30.70.270">
    <property type="match status" value="1"/>
</dbReference>
<dbReference type="InterPro" id="IPR043502">
    <property type="entry name" value="DNA/RNA_pol_sf"/>
</dbReference>
<dbReference type="InterPro" id="IPR000605">
    <property type="entry name" value="Helicase_SF3_ssDNA/RNA_vir"/>
</dbReference>
<dbReference type="InterPro" id="IPR014759">
    <property type="entry name" value="Helicase_SF3_ssRNA_vir"/>
</dbReference>
<dbReference type="InterPro" id="IPR027417">
    <property type="entry name" value="P-loop_NTPase"/>
</dbReference>
<dbReference type="InterPro" id="IPR044067">
    <property type="entry name" value="PCV_3C_PRO"/>
</dbReference>
<dbReference type="InterPro" id="IPR009003">
    <property type="entry name" value="Peptidase_S1_PA"/>
</dbReference>
<dbReference type="InterPro" id="IPR043128">
    <property type="entry name" value="Rev_trsase/Diguanyl_cyclase"/>
</dbReference>
<dbReference type="InterPro" id="IPR001205">
    <property type="entry name" value="RNA-dir_pol_C"/>
</dbReference>
<dbReference type="InterPro" id="IPR007094">
    <property type="entry name" value="RNA-dir_pol_PSvirus"/>
</dbReference>
<dbReference type="InterPro" id="IPR029053">
    <property type="entry name" value="Viral_coat"/>
</dbReference>
<dbReference type="Pfam" id="PF00680">
    <property type="entry name" value="RdRP_1"/>
    <property type="match status" value="1"/>
</dbReference>
<dbReference type="Pfam" id="PF00910">
    <property type="entry name" value="RNA_helicase"/>
    <property type="match status" value="1"/>
</dbReference>
<dbReference type="SUPFAM" id="SSF56672">
    <property type="entry name" value="DNA/RNA polymerases"/>
    <property type="match status" value="1"/>
</dbReference>
<dbReference type="SUPFAM" id="SSF52540">
    <property type="entry name" value="P-loop containing nucleoside triphosphate hydrolases"/>
    <property type="match status" value="1"/>
</dbReference>
<dbReference type="SUPFAM" id="SSF88633">
    <property type="entry name" value="Positive stranded ssRNA viruses"/>
    <property type="match status" value="1"/>
</dbReference>
<dbReference type="SUPFAM" id="SSF50494">
    <property type="entry name" value="Trypsin-like serine proteases"/>
    <property type="match status" value="1"/>
</dbReference>
<dbReference type="PROSITE" id="PS51874">
    <property type="entry name" value="PCV_3C_PRO"/>
    <property type="match status" value="1"/>
</dbReference>
<dbReference type="PROSITE" id="PS50507">
    <property type="entry name" value="RDRP_SSRNA_POS"/>
    <property type="match status" value="1"/>
</dbReference>
<dbReference type="PROSITE" id="PS51218">
    <property type="entry name" value="SF3_HELICASE_2"/>
    <property type="match status" value="1"/>
</dbReference>
<feature type="chain" id="PRO_0000442445" description="Polyprotein-FSD">
    <location>
        <begin position="1"/>
        <end position="3390"/>
    </location>
</feature>
<feature type="chain" id="PRO_0000442446" description="Helicase">
    <location>
        <begin position="1"/>
        <end status="unknown"/>
    </location>
</feature>
<feature type="chain" id="PRO_0000442447" description="3C-like protease">
    <location>
        <begin status="unknown"/>
        <end position="1432" status="uncertain"/>
    </location>
</feature>
<feature type="chain" id="PRO_0000442448" description="RNA-directed RNA polymerase">
    <location>
        <begin position="1433" status="uncertain"/>
        <end position="2345"/>
    </location>
</feature>
<feature type="chain" id="PRO_0000442449" description="Capsid protein VP1-FSD">
    <location>
        <begin position="2346"/>
        <end position="3016"/>
    </location>
</feature>
<feature type="chain" id="PRO_0000442450" description="Capsid protein VP2">
    <location>
        <begin position="3017"/>
        <end position="3390"/>
    </location>
</feature>
<feature type="domain" description="SF3 helicase" evidence="3">
    <location>
        <begin position="369"/>
        <end position="543"/>
    </location>
</feature>
<feature type="domain" description="Peptidase C3" evidence="4">
    <location>
        <begin position="1206"/>
        <end position="1423"/>
    </location>
</feature>
<feature type="domain" description="RdRp catalytic" evidence="2">
    <location>
        <begin position="1914"/>
        <end position="2042"/>
    </location>
</feature>
<feature type="region of interest" description="Disordered" evidence="5">
    <location>
        <begin position="2576"/>
        <end position="2609"/>
    </location>
</feature>
<feature type="region of interest" description="Disordered" evidence="5">
    <location>
        <begin position="3168"/>
        <end position="3190"/>
    </location>
</feature>
<feature type="compositionally biased region" description="Acidic residues" evidence="5">
    <location>
        <begin position="2587"/>
        <end position="2609"/>
    </location>
</feature>
<feature type="active site" description="For 3C-like protease activity" evidence="4 10">
    <location>
        <position position="1258"/>
    </location>
</feature>
<feature type="active site" description="For 3C-like protease activity" evidence="4 10">
    <location>
        <position position="1295"/>
    </location>
</feature>
<feature type="active site" description="For 3C-like protease activity" evidence="4 10">
    <location>
        <position position="1381"/>
    </location>
</feature>
<feature type="binding site" evidence="3">
    <location>
        <begin position="396"/>
        <end position="403"/>
    </location>
    <ligand>
        <name>ATP</name>
        <dbReference type="ChEBI" id="CHEBI:30616"/>
    </ligand>
</feature>
<feature type="site" description="Cleavage" evidence="6">
    <location>
        <begin position="2345"/>
        <end position="2346"/>
    </location>
</feature>
<feature type="site" description="Cleavage" evidence="11">
    <location>
        <begin position="3016"/>
        <end position="3017"/>
    </location>
</feature>
<feature type="modified residue" description="N-acetylmethionine; by host" evidence="6">
    <location>
        <position position="2346"/>
    </location>
</feature>
<evidence type="ECO:0000250" key="1">
    <source>
        <dbReference type="UniProtKB" id="Q6UP17"/>
    </source>
</evidence>
<evidence type="ECO:0000255" key="2">
    <source>
        <dbReference type="PROSITE-ProRule" id="PRU00539"/>
    </source>
</evidence>
<evidence type="ECO:0000255" key="3">
    <source>
        <dbReference type="PROSITE-ProRule" id="PRU00551"/>
    </source>
</evidence>
<evidence type="ECO:0000255" key="4">
    <source>
        <dbReference type="PROSITE-ProRule" id="PRU01222"/>
    </source>
</evidence>
<evidence type="ECO:0000256" key="5">
    <source>
        <dbReference type="SAM" id="MobiDB-lite"/>
    </source>
</evidence>
<evidence type="ECO:0000269" key="6">
    <source>
    </source>
</evidence>
<evidence type="ECO:0000303" key="7">
    <source>
    </source>
</evidence>
<evidence type="ECO:0000303" key="8">
    <source>
    </source>
</evidence>
<evidence type="ECO:0000305" key="9"/>
<evidence type="ECO:0000305" key="10">
    <source>
    </source>
</evidence>
<evidence type="ECO:0000305" key="11">
    <source>
    </source>
</evidence>
<evidence type="ECO:0000312" key="12">
    <source>
        <dbReference type="EMBL" id="ACO37272.1"/>
    </source>
</evidence>
<organism>
    <name type="scientific">Solenopsis invicta virus 3</name>
    <name type="common">SINV-3</name>
    <dbReference type="NCBI Taxonomy" id="631345"/>
    <lineage>
        <taxon>Viruses</taxon>
        <taxon>Riboviria</taxon>
        <taxon>Orthornavirae</taxon>
        <taxon>Pisuviricota</taxon>
        <taxon>Pisoniviricetes</taxon>
        <taxon>Picornavirales</taxon>
        <taxon>Solinviviridae</taxon>
        <taxon>Invictavirus</taxon>
    </lineage>
</organism>
<sequence length="3390" mass="390107">MSEKTQTFVQNETHVLDMTSDFKSDLSLEKVTSSVEQTDDLVSKIINNNDLDIKDLSFLRNLLLSTLQYLGIAKFVAINITLSILSILMLLINSCAKFTRIVNLSSHILNIITTLGLYFQVSSMEIEEITQTFENEFGTYDDDKILSHYIKICNLPNRKDVYEYISLNDLKYKIKLPDISFYELKNDILSKNKNLHLWIFQKFTDEFLAMWFGVQPYRISNLREMLVISRQGFIPKDLFNEIRKLCNMGVSVIISFIQSKLFDEPFKKRDCTQALKDASVISSPFDTLWNLISKQVCDNSAEERFTQTILDFTSEFDNFLGIPNYKFAKNQKLVNTISKSLDACAKFIRDCPKDKQTEIFPLQGLHTATVKRRNEILTNVMPKFARQEPFVVLFQGPGGIGKTHLVQQLATKCVNSFYQDHEDDYIEISPDDKYWPPLSGQRVAFFDEAGNLNDLTEDLLFRNIKSICSPAYFNCAAADIEHKISPCPFELVFATVNTDLDTLQSKISSTFGQASVFPIWRRCIVVECSWNEKELGPFNYKNPSGHRSDYSHITMNYMSYDDKTQKLALEKEINFDTLFDMIRLRFRKKQQEHDTKISILNNEIQRQSNSKQHFSVCLYGEPGQGKTYNLNKLITTFANATNLKIGSEEKPSIHIFDDYIKDENDENCSKFMDIYNNKLPNNSVIFSATNVYPKTHFFPTFFLTNLIYAFIQPFKQVGLYRRLGFDGYTDIPNSSVNAPIFVQNFKFYERKQHICYFLSLEFLKNIICYIFFFLYFPLKFIKKIDLIEIKDVNKYVYDRYINFLSLSKQIEIVEYPPNLENVEFDFRFNMNKFHRVSFNNPFELDKYIHFNKNSYENLLHFDWKMYLSPRVKHRLALSYEKFFITISEVNKEIIIEELKRYVLLFKQFNIDPNMEINLGEYGSFYYINGKIHLMTINIESNVSEIPVFTDGDYVYISEHKIPVIDLFDNININSKYNLSFDQSIALNSFKTGDSFYSNAKVRKSLSKFVLLNYQTKFKLYLKEAKDKVKNFIETPIGHLLSILLTIFVICYASFKIYSKFSNFFSKDQAIEDQRKGEKKIKKITNYDSDGVQPQRKGEKKIKKVTNYDSDGVQPQSNVKVEEEIKLVFDPTGQKLLFGNDFTSELETLVELEKDDEEFTKSKIDNKSMAGLRREVRRRRYARSKKAQIEKQEVLTLPDVNGFEGGKPYFQIAEEKARKNLCQIYMIANNENCIASKFSDHIVCYGLFVFKKRLASVGHIVEALKCAPGYNLYAGCDQFNGKLYKMNLVRNYRKRELSVWDVDCPNDFVDLTSFFIPKEELYDAENCNTVLGRFGMNKREVYLYGNCEFIQEFFKVDNKGAQEFGYIDWATVDITLTTGGDCGLPYYICERKKFHNKIMGLHFAGNNVNHKTIGMSALIYKEDLVVWKGAERQSKCKFCDVKDIIIAQPDIPKEKYKGYNHEIVWNSLHESSPTTLNEELEHYLNIFPKFTGTIIKHSGDKFYGSVKHSHTQFISKFKTELTVTNGWKLSTAGDCQFESNHISPNTEVMYRVVDVQFNSIFKAFKSQPYIKNFRLIANVYEKDGKQRVTILTIIPVSDFNVKQQTVRQALVPLHLNEDEEVYVTEDVSDIFKTAIKRKQRGILPDVPYETVENETVEILGITHRNMTPEPAQMYKPTPFYKLALKFNLDHKLPVNFNMKDCPQEQKDMMVLDRLGQPNPRITQSLKWAHKDYSPDYELRKYVKEQYMCNIMEYYAGCNLLTEEQILKGYGPNHRLYGALGGMEIDSSIGWTMKELYRVTKKSDVINLDSNGNYSFLNNEAAQYTQELLKISMEQAHNGQRYYTAFNELMKMEKLKPSKNFIPRTFTAQDLNGVLMERWILGEFTARALAWDENCAVGCNPYATFHKFATKFFKFKNFFSCDYKNFDRTIPKCVFEDFRDMLIQANPHMKNEIYACFQTIIDRIQVSGNSILLVHGGMPSGCVPTAPLNSKVNDIMIYTAYVNILRRADRGDITSYRYYRDLVCRLFYGDDVIIAVDDSIADIFNCQTLSEEMKILFGMNMTDGSKSDIIPKFETIETLSFISRFFRPLKHQENFIVGALKKISIQTHFYYATDDTPEHFGQVFKTIQEEAALWEEEYFNKIQSYIQEIIRKFPEISKFFNFESYKSIQKRYIMNGWNEFVKLEKLDLNLNKKKSSKVTGIHSKQYSKFLKFLSRIENEKAALEGNFNKESVNTWYFKMSKAMHLNEIFQKGLISKPLAEFYFNEGQKMWDCNITFRRSKDDLPFTFSGSGTTKACAREQAAEEALVLFSQEDEIVRQINDIQSDCKFCKKMIRYKKLLSGVSIQRQMNVSKITENHVPSAGMMATDPSVAPDSGIATNTQTPSISRVLNPIARALDNPAGTGAPFDKHTYVYNVFTRWPEMSTVVNKSLAAGAEVFKISLDPNKLPKRILQYIQFHKTIIPQIEVQILIGGAAGTVGWLKVGWVPDASTAKKYSLDDLQLVASETINLNSTITMSMIINDSRRNGMFRLTKSDPEPWPGIVCLVEHPITNVQRNDDVNYPVIVSVRLGPDCQLMQPYNDLNLSGGTDPDPDPEPDPDPEPGPDPEPGVDELDLSKYIPNQLIDLLICNSYVPNNVSVDFLSTYPNLNFSIHNITDVVVSSKPYTLALFETESQINSASVWRGDLTQLSVFIQYKFYTRVEAYNKVTTVHTDKWTPNFDGTVYKPVDVKIEHAYGTYELTTMWLTSYGLVMEWSLDESRVFYGTYKTDSNGRRWLIDGNTPIARSDHCFIVSSPDLLSDDKAYYNNPIGAKQGGKLVDGAQIYRIFKTESGGYRSDPFVPETYWPSETPYNADWSGVKMPYQIRKVIQTGNNLAGKHLDGDLKMCAMIRQGSSSTQSTDNYFYPIYVHNFSALLKQMNLILKERKTKYIKFDLQVGGKPFAQMGFGDGAFIGRTTMFRQIRAAITNVILLKNIVGVDDLSGLQALPTSGFADWVVKAQSTNSKFLNDFYNDKISIERQASLGIAAAIGAGQGLFGGLSAQWQWQQQADWSRQMQRERLDMMEKLANINNQARLNQLTQSGAQQRITQQAAYQQQMNALGAGSVSAQNGMYTPSNYTPLPSYKSNTTNYYNNSVYHTDNNITNNPSNTSLTNNINNFNPELFQQQRERMPTPSEAYDNSKGFVPQPGTSKSIATENINPNYKDEEHIYEPIEQQNHEYADIDYNAMNISRENKNSSNFGNVGILDHQYADIDYDAMKIARDQQNSSKFGNVGVLNHQYAELDFSKNNTRKNSQILDNSLYSKTQPSSKMIDNSLYGINPNKMVENQNYEPASMERKNSIYSSNLNSSNNLKFNNIPNFKGPTNLNISGAKPAGFGSGIIQPAINKYTDFSKPN</sequence>
<proteinExistence type="evidence at protein level"/>